<dbReference type="EMBL" id="X05956">
    <property type="protein sequence ID" value="CAA29390.1"/>
    <property type="molecule type" value="Genomic_DNA"/>
</dbReference>
<dbReference type="PIR" id="S03416">
    <property type="entry name" value="S03416"/>
</dbReference>
<dbReference type="SMR" id="P16944"/>
<dbReference type="STRING" id="216599.GCA_000283715_00722"/>
<dbReference type="GO" id="GO:0003677">
    <property type="term" value="F:DNA binding"/>
    <property type="evidence" value="ECO:0007669"/>
    <property type="project" value="UniProtKB-KW"/>
</dbReference>
<dbReference type="GO" id="GO:0015074">
    <property type="term" value="P:DNA integration"/>
    <property type="evidence" value="ECO:0007669"/>
    <property type="project" value="InterPro"/>
</dbReference>
<dbReference type="GO" id="GO:0006310">
    <property type="term" value="P:DNA recombination"/>
    <property type="evidence" value="ECO:0007669"/>
    <property type="project" value="UniProtKB-KW"/>
</dbReference>
<dbReference type="GO" id="GO:0032196">
    <property type="term" value="P:transposition"/>
    <property type="evidence" value="ECO:0007669"/>
    <property type="project" value="UniProtKB-KW"/>
</dbReference>
<dbReference type="Gene3D" id="3.30.420.10">
    <property type="entry name" value="Ribonuclease H-like superfamily/Ribonuclease H"/>
    <property type="match status" value="1"/>
</dbReference>
<dbReference type="InterPro" id="IPR017894">
    <property type="entry name" value="HTH_IS21_transposase_type"/>
</dbReference>
<dbReference type="InterPro" id="IPR001584">
    <property type="entry name" value="Integrase_cat-core"/>
</dbReference>
<dbReference type="InterPro" id="IPR012337">
    <property type="entry name" value="RNaseH-like_sf"/>
</dbReference>
<dbReference type="InterPro" id="IPR036397">
    <property type="entry name" value="RNaseH_sf"/>
</dbReference>
<dbReference type="NCBIfam" id="NF033546">
    <property type="entry name" value="transpos_IS21"/>
    <property type="match status" value="1"/>
</dbReference>
<dbReference type="PANTHER" id="PTHR35004:SF7">
    <property type="entry name" value="INTEGRASE PROTEIN"/>
    <property type="match status" value="1"/>
</dbReference>
<dbReference type="PANTHER" id="PTHR35004">
    <property type="entry name" value="TRANSPOSASE RV3428C-RELATED"/>
    <property type="match status" value="1"/>
</dbReference>
<dbReference type="Pfam" id="PF00665">
    <property type="entry name" value="rve"/>
    <property type="match status" value="1"/>
</dbReference>
<dbReference type="SUPFAM" id="SSF53098">
    <property type="entry name" value="Ribonuclease H-like"/>
    <property type="match status" value="1"/>
</dbReference>
<dbReference type="PROSITE" id="PS50531">
    <property type="entry name" value="HTH_IS21"/>
    <property type="match status" value="1"/>
</dbReference>
<dbReference type="PROSITE" id="PS50994">
    <property type="entry name" value="INTEGRASE"/>
    <property type="match status" value="1"/>
</dbReference>
<name>ISTA_SHISO</name>
<gene>
    <name type="primary">istA</name>
</gene>
<reference key="1">
    <citation type="journal article" date="1987" name="J. Mol. Biol.">
        <title>Isolation and characterization of IS elements repeated in the bacterial chromosome.</title>
        <authorList>
            <person name="Matsutani S."/>
            <person name="Ohtsubo H."/>
            <person name="Maeda Y."/>
            <person name="Ohtsubo E."/>
        </authorList>
    </citation>
    <scope>NUCLEOTIDE SEQUENCE [GENOMIC DNA]</scope>
</reference>
<feature type="chain" id="PRO_0000075461" description="Transposase for insertion sequence element IS640">
    <location>
        <begin position="1"/>
        <end position="315"/>
    </location>
</feature>
<feature type="domain" description="HTH IS21-type" evidence="2">
    <location>
        <begin position="5"/>
        <end position="66"/>
    </location>
</feature>
<feature type="domain" description="Integrase catalytic" evidence="1">
    <location>
        <begin position="111"/>
        <end position="285"/>
    </location>
</feature>
<comment type="function">
    <text>Involved in the transposition of the insertion sequence.</text>
</comment>
<comment type="similarity">
    <text evidence="3">Belongs to the transposase IS21/IS408/IS1162 family.</text>
</comment>
<evidence type="ECO:0000255" key="1">
    <source>
        <dbReference type="PROSITE-ProRule" id="PRU00457"/>
    </source>
</evidence>
<evidence type="ECO:0000255" key="2">
    <source>
        <dbReference type="PROSITE-ProRule" id="PRU00615"/>
    </source>
</evidence>
<evidence type="ECO:0000305" key="3"/>
<organism>
    <name type="scientific">Shigella sonnei</name>
    <dbReference type="NCBI Taxonomy" id="624"/>
    <lineage>
        <taxon>Bacteria</taxon>
        <taxon>Pseudomonadati</taxon>
        <taxon>Pseudomonadota</taxon>
        <taxon>Gammaproteobacteria</taxon>
        <taxon>Enterobacterales</taxon>
        <taxon>Enterobacteriaceae</taxon>
        <taxon>Shigella</taxon>
    </lineage>
</organism>
<proteinExistence type="inferred from homology"/>
<sequence length="315" mass="37544">MLSREDFYMIKQMRHEGAYIVDIATQIGCSERTVRRYLKYPEPPARKTRHKMVKLKPFMDYIDMRLAENVWNSEVIFAEIKAMGYTGGRSMLRYYIQPKRKMRPSKRTVRFETQPGYQLQHDWGEVEVEVAGQRCKVNFAVNTLGFSRSFHVFAAPKHDAEHTYESLVRAFRYFGGCVKTVLVDNQKAAVLKNNNGKVVFNSGFLLLADHYNFLPRACRPRRARTKGKVERMVKYLKENFFVRYRRFDSFTHVNQQLEQWIADVADKRELRQFKETPEQRSRWSRNICSVTGYRLRYQLLRYPPCVLGQLYRGWW</sequence>
<keyword id="KW-0233">DNA recombination</keyword>
<keyword id="KW-0238">DNA-binding</keyword>
<keyword id="KW-0814">Transposable element</keyword>
<keyword id="KW-0815">Transposition</keyword>
<protein>
    <recommendedName>
        <fullName>Transposase for insertion sequence element IS640</fullName>
    </recommendedName>
</protein>
<accession>P16944</accession>